<dbReference type="EMBL" id="CP001158">
    <property type="protein sequence ID" value="ACL30305.1"/>
    <property type="molecule type" value="Genomic_DNA"/>
</dbReference>
<dbReference type="SMR" id="B8D840"/>
<dbReference type="KEGG" id="bau:BUAPTUC7_509"/>
<dbReference type="HOGENOM" id="CLU_073626_1_1_6"/>
<dbReference type="GO" id="GO:0022627">
    <property type="term" value="C:cytosolic small ribosomal subunit"/>
    <property type="evidence" value="ECO:0007669"/>
    <property type="project" value="TreeGrafter"/>
</dbReference>
<dbReference type="GO" id="GO:0019843">
    <property type="term" value="F:rRNA binding"/>
    <property type="evidence" value="ECO:0007669"/>
    <property type="project" value="UniProtKB-UniRule"/>
</dbReference>
<dbReference type="GO" id="GO:0003735">
    <property type="term" value="F:structural constituent of ribosome"/>
    <property type="evidence" value="ECO:0007669"/>
    <property type="project" value="InterPro"/>
</dbReference>
<dbReference type="GO" id="GO:0006412">
    <property type="term" value="P:translation"/>
    <property type="evidence" value="ECO:0007669"/>
    <property type="project" value="UniProtKB-UniRule"/>
</dbReference>
<dbReference type="CDD" id="cd00364">
    <property type="entry name" value="Ribosomal_uS17"/>
    <property type="match status" value="1"/>
</dbReference>
<dbReference type="FunFam" id="2.40.50.140:FF:000014">
    <property type="entry name" value="30S ribosomal protein S17"/>
    <property type="match status" value="1"/>
</dbReference>
<dbReference type="Gene3D" id="2.40.50.140">
    <property type="entry name" value="Nucleic acid-binding proteins"/>
    <property type="match status" value="1"/>
</dbReference>
<dbReference type="HAMAP" id="MF_01345_B">
    <property type="entry name" value="Ribosomal_uS17_B"/>
    <property type="match status" value="1"/>
</dbReference>
<dbReference type="InterPro" id="IPR012340">
    <property type="entry name" value="NA-bd_OB-fold"/>
</dbReference>
<dbReference type="InterPro" id="IPR000266">
    <property type="entry name" value="Ribosomal_uS17"/>
</dbReference>
<dbReference type="InterPro" id="IPR019984">
    <property type="entry name" value="Ribosomal_uS17_bact/chlr"/>
</dbReference>
<dbReference type="InterPro" id="IPR019979">
    <property type="entry name" value="Ribosomal_uS17_CS"/>
</dbReference>
<dbReference type="NCBIfam" id="NF004123">
    <property type="entry name" value="PRK05610.1"/>
    <property type="match status" value="1"/>
</dbReference>
<dbReference type="NCBIfam" id="TIGR03635">
    <property type="entry name" value="uS17_bact"/>
    <property type="match status" value="1"/>
</dbReference>
<dbReference type="PANTHER" id="PTHR10744">
    <property type="entry name" value="40S RIBOSOMAL PROTEIN S11 FAMILY MEMBER"/>
    <property type="match status" value="1"/>
</dbReference>
<dbReference type="PANTHER" id="PTHR10744:SF1">
    <property type="entry name" value="SMALL RIBOSOMAL SUBUNIT PROTEIN US17M"/>
    <property type="match status" value="1"/>
</dbReference>
<dbReference type="Pfam" id="PF00366">
    <property type="entry name" value="Ribosomal_S17"/>
    <property type="match status" value="1"/>
</dbReference>
<dbReference type="PRINTS" id="PR00973">
    <property type="entry name" value="RIBOSOMALS17"/>
</dbReference>
<dbReference type="SUPFAM" id="SSF50249">
    <property type="entry name" value="Nucleic acid-binding proteins"/>
    <property type="match status" value="1"/>
</dbReference>
<dbReference type="PROSITE" id="PS00056">
    <property type="entry name" value="RIBOSOMAL_S17"/>
    <property type="match status" value="1"/>
</dbReference>
<evidence type="ECO:0000255" key="1">
    <source>
        <dbReference type="HAMAP-Rule" id="MF_01345"/>
    </source>
</evidence>
<evidence type="ECO:0000305" key="2"/>
<accession>B8D840</accession>
<keyword id="KW-0687">Ribonucleoprotein</keyword>
<keyword id="KW-0689">Ribosomal protein</keyword>
<keyword id="KW-0694">RNA-binding</keyword>
<keyword id="KW-0699">rRNA-binding</keyword>
<feature type="chain" id="PRO_1000166467" description="Small ribosomal subunit protein uS17">
    <location>
        <begin position="1"/>
        <end position="83"/>
    </location>
</feature>
<reference key="1">
    <citation type="journal article" date="2009" name="Science">
        <title>The dynamics and time scale of ongoing genomic erosion in symbiotic bacteria.</title>
        <authorList>
            <person name="Moran N.A."/>
            <person name="McLaughlin H.J."/>
            <person name="Sorek R."/>
        </authorList>
    </citation>
    <scope>NUCLEOTIDE SEQUENCE [LARGE SCALE GENOMIC DNA]</scope>
    <source>
        <strain>Tuc7</strain>
    </source>
</reference>
<gene>
    <name evidence="1" type="primary">rpsQ</name>
    <name type="ordered locus">BUAPTUC7_509</name>
</gene>
<name>RS17_BUCAT</name>
<sequence length="83" mass="9764">MEKIRTLQGRVISNKMQKSAVVAIERFVKHIIYGKFIKRTTKLHIHDEKNECTVGDLIEIRESRPISKTKSWVLVRIIEKTVF</sequence>
<protein>
    <recommendedName>
        <fullName evidence="1">Small ribosomal subunit protein uS17</fullName>
    </recommendedName>
    <alternativeName>
        <fullName evidence="2">30S ribosomal protein S17</fullName>
    </alternativeName>
</protein>
<comment type="function">
    <text evidence="1">One of the primary rRNA binding proteins, it binds specifically to the 5'-end of 16S ribosomal RNA.</text>
</comment>
<comment type="subunit">
    <text evidence="1">Part of the 30S ribosomal subunit.</text>
</comment>
<comment type="similarity">
    <text evidence="1">Belongs to the universal ribosomal protein uS17 family.</text>
</comment>
<proteinExistence type="inferred from homology"/>
<organism>
    <name type="scientific">Buchnera aphidicola subsp. Acyrthosiphon pisum (strain Tuc7)</name>
    <dbReference type="NCBI Taxonomy" id="561501"/>
    <lineage>
        <taxon>Bacteria</taxon>
        <taxon>Pseudomonadati</taxon>
        <taxon>Pseudomonadota</taxon>
        <taxon>Gammaproteobacteria</taxon>
        <taxon>Enterobacterales</taxon>
        <taxon>Erwiniaceae</taxon>
        <taxon>Buchnera</taxon>
    </lineage>
</organism>